<name>ISPH_THEP1</name>
<feature type="chain" id="PRO_1000021190" description="4-hydroxy-3-methylbut-2-enyl diphosphate reductase">
    <location>
        <begin position="1"/>
        <end position="275"/>
    </location>
</feature>
<feature type="active site" description="Proton donor" evidence="1">
    <location>
        <position position="121"/>
    </location>
</feature>
<feature type="binding site" evidence="1">
    <location>
        <position position="12"/>
    </location>
    <ligand>
        <name>[4Fe-4S] cluster</name>
        <dbReference type="ChEBI" id="CHEBI:49883"/>
    </ligand>
</feature>
<feature type="binding site" evidence="1">
    <location>
        <position position="40"/>
    </location>
    <ligand>
        <name>(2E)-4-hydroxy-3-methylbut-2-enyl diphosphate</name>
        <dbReference type="ChEBI" id="CHEBI:128753"/>
    </ligand>
</feature>
<feature type="binding site" evidence="1">
    <location>
        <position position="40"/>
    </location>
    <ligand>
        <name>dimethylallyl diphosphate</name>
        <dbReference type="ChEBI" id="CHEBI:57623"/>
    </ligand>
</feature>
<feature type="binding site" evidence="1">
    <location>
        <position position="40"/>
    </location>
    <ligand>
        <name>isopentenyl diphosphate</name>
        <dbReference type="ChEBI" id="CHEBI:128769"/>
    </ligand>
</feature>
<feature type="binding site" evidence="1">
    <location>
        <position position="70"/>
    </location>
    <ligand>
        <name>(2E)-4-hydroxy-3-methylbut-2-enyl diphosphate</name>
        <dbReference type="ChEBI" id="CHEBI:128753"/>
    </ligand>
</feature>
<feature type="binding site" evidence="1">
    <location>
        <position position="70"/>
    </location>
    <ligand>
        <name>dimethylallyl diphosphate</name>
        <dbReference type="ChEBI" id="CHEBI:57623"/>
    </ligand>
</feature>
<feature type="binding site" evidence="1">
    <location>
        <position position="70"/>
    </location>
    <ligand>
        <name>isopentenyl diphosphate</name>
        <dbReference type="ChEBI" id="CHEBI:128769"/>
    </ligand>
</feature>
<feature type="binding site" evidence="1">
    <location>
        <position position="92"/>
    </location>
    <ligand>
        <name>[4Fe-4S] cluster</name>
        <dbReference type="ChEBI" id="CHEBI:49883"/>
    </ligand>
</feature>
<feature type="binding site" evidence="1">
    <location>
        <position position="119"/>
    </location>
    <ligand>
        <name>(2E)-4-hydroxy-3-methylbut-2-enyl diphosphate</name>
        <dbReference type="ChEBI" id="CHEBI:128753"/>
    </ligand>
</feature>
<feature type="binding site" evidence="1">
    <location>
        <position position="119"/>
    </location>
    <ligand>
        <name>dimethylallyl diphosphate</name>
        <dbReference type="ChEBI" id="CHEBI:57623"/>
    </ligand>
</feature>
<feature type="binding site" evidence="1">
    <location>
        <position position="119"/>
    </location>
    <ligand>
        <name>isopentenyl diphosphate</name>
        <dbReference type="ChEBI" id="CHEBI:128769"/>
    </ligand>
</feature>
<feature type="binding site" evidence="1">
    <location>
        <position position="151"/>
    </location>
    <ligand>
        <name>(2E)-4-hydroxy-3-methylbut-2-enyl diphosphate</name>
        <dbReference type="ChEBI" id="CHEBI:128753"/>
    </ligand>
</feature>
<feature type="binding site" evidence="1">
    <location>
        <position position="181"/>
    </location>
    <ligand>
        <name>[4Fe-4S] cluster</name>
        <dbReference type="ChEBI" id="CHEBI:49883"/>
    </ligand>
</feature>
<feature type="binding site" evidence="1">
    <location>
        <position position="209"/>
    </location>
    <ligand>
        <name>(2E)-4-hydroxy-3-methylbut-2-enyl diphosphate</name>
        <dbReference type="ChEBI" id="CHEBI:128753"/>
    </ligand>
</feature>
<feature type="binding site" evidence="1">
    <location>
        <position position="209"/>
    </location>
    <ligand>
        <name>dimethylallyl diphosphate</name>
        <dbReference type="ChEBI" id="CHEBI:57623"/>
    </ligand>
</feature>
<feature type="binding site" evidence="1">
    <location>
        <position position="209"/>
    </location>
    <ligand>
        <name>isopentenyl diphosphate</name>
        <dbReference type="ChEBI" id="CHEBI:128769"/>
    </ligand>
</feature>
<feature type="binding site" evidence="1">
    <location>
        <position position="210"/>
    </location>
    <ligand>
        <name>(2E)-4-hydroxy-3-methylbut-2-enyl diphosphate</name>
        <dbReference type="ChEBI" id="CHEBI:128753"/>
    </ligand>
</feature>
<feature type="binding site" evidence="1">
    <location>
        <position position="210"/>
    </location>
    <ligand>
        <name>dimethylallyl diphosphate</name>
        <dbReference type="ChEBI" id="CHEBI:57623"/>
    </ligand>
</feature>
<feature type="binding site" evidence="1">
    <location>
        <position position="210"/>
    </location>
    <ligand>
        <name>isopentenyl diphosphate</name>
        <dbReference type="ChEBI" id="CHEBI:128769"/>
    </ligand>
</feature>
<feature type="binding site" evidence="1">
    <location>
        <position position="211"/>
    </location>
    <ligand>
        <name>(2E)-4-hydroxy-3-methylbut-2-enyl diphosphate</name>
        <dbReference type="ChEBI" id="CHEBI:128753"/>
    </ligand>
</feature>
<feature type="binding site" evidence="1">
    <location>
        <position position="211"/>
    </location>
    <ligand>
        <name>dimethylallyl diphosphate</name>
        <dbReference type="ChEBI" id="CHEBI:57623"/>
    </ligand>
</feature>
<feature type="binding site" evidence="1">
    <location>
        <position position="211"/>
    </location>
    <ligand>
        <name>isopentenyl diphosphate</name>
        <dbReference type="ChEBI" id="CHEBI:128769"/>
    </ligand>
</feature>
<feature type="binding site" evidence="1">
    <location>
        <position position="251"/>
    </location>
    <ligand>
        <name>(2E)-4-hydroxy-3-methylbut-2-enyl diphosphate</name>
        <dbReference type="ChEBI" id="CHEBI:128753"/>
    </ligand>
</feature>
<feature type="binding site" evidence="1">
    <location>
        <position position="251"/>
    </location>
    <ligand>
        <name>dimethylallyl diphosphate</name>
        <dbReference type="ChEBI" id="CHEBI:57623"/>
    </ligand>
</feature>
<feature type="binding site" evidence="1">
    <location>
        <position position="251"/>
    </location>
    <ligand>
        <name>isopentenyl diphosphate</name>
        <dbReference type="ChEBI" id="CHEBI:128769"/>
    </ligand>
</feature>
<proteinExistence type="inferred from homology"/>
<dbReference type="EC" id="1.17.7.4" evidence="1"/>
<dbReference type="EMBL" id="CP000702">
    <property type="protein sequence ID" value="ABQ47364.1"/>
    <property type="molecule type" value="Genomic_DNA"/>
</dbReference>
<dbReference type="RefSeq" id="WP_011943823.1">
    <property type="nucleotide sequence ID" value="NC_009486.1"/>
</dbReference>
<dbReference type="SMR" id="A5IME1"/>
<dbReference type="STRING" id="390874.Tpet_1350"/>
<dbReference type="KEGG" id="tpt:Tpet_1350"/>
<dbReference type="eggNOG" id="COG0761">
    <property type="taxonomic scope" value="Bacteria"/>
</dbReference>
<dbReference type="HOGENOM" id="CLU_027486_0_1_0"/>
<dbReference type="UniPathway" id="UPA00056">
    <property type="reaction ID" value="UER00097"/>
</dbReference>
<dbReference type="UniPathway" id="UPA00059">
    <property type="reaction ID" value="UER00105"/>
</dbReference>
<dbReference type="Proteomes" id="UP000006558">
    <property type="component" value="Chromosome"/>
</dbReference>
<dbReference type="GO" id="GO:0051539">
    <property type="term" value="F:4 iron, 4 sulfur cluster binding"/>
    <property type="evidence" value="ECO:0007669"/>
    <property type="project" value="UniProtKB-UniRule"/>
</dbReference>
<dbReference type="GO" id="GO:0051745">
    <property type="term" value="F:4-hydroxy-3-methylbut-2-enyl diphosphate reductase activity"/>
    <property type="evidence" value="ECO:0007669"/>
    <property type="project" value="UniProtKB-UniRule"/>
</dbReference>
<dbReference type="GO" id="GO:0046872">
    <property type="term" value="F:metal ion binding"/>
    <property type="evidence" value="ECO:0007669"/>
    <property type="project" value="UniProtKB-KW"/>
</dbReference>
<dbReference type="GO" id="GO:0050992">
    <property type="term" value="P:dimethylallyl diphosphate biosynthetic process"/>
    <property type="evidence" value="ECO:0007669"/>
    <property type="project" value="UniProtKB-UniRule"/>
</dbReference>
<dbReference type="GO" id="GO:0019288">
    <property type="term" value="P:isopentenyl diphosphate biosynthetic process, methylerythritol 4-phosphate pathway"/>
    <property type="evidence" value="ECO:0007669"/>
    <property type="project" value="UniProtKB-UniRule"/>
</dbReference>
<dbReference type="GO" id="GO:0016114">
    <property type="term" value="P:terpenoid biosynthetic process"/>
    <property type="evidence" value="ECO:0007669"/>
    <property type="project" value="UniProtKB-UniRule"/>
</dbReference>
<dbReference type="CDD" id="cd13944">
    <property type="entry name" value="lytB_ispH"/>
    <property type="match status" value="1"/>
</dbReference>
<dbReference type="Gene3D" id="3.40.50.11270">
    <property type="match status" value="1"/>
</dbReference>
<dbReference type="Gene3D" id="3.40.1010.20">
    <property type="entry name" value="4-hydroxy-3-methylbut-2-enyl diphosphate reductase, catalytic domain"/>
    <property type="match status" value="2"/>
</dbReference>
<dbReference type="HAMAP" id="MF_00191">
    <property type="entry name" value="IspH"/>
    <property type="match status" value="1"/>
</dbReference>
<dbReference type="InterPro" id="IPR003451">
    <property type="entry name" value="LytB/IspH"/>
</dbReference>
<dbReference type="NCBIfam" id="TIGR00216">
    <property type="entry name" value="ispH_lytB"/>
    <property type="match status" value="1"/>
</dbReference>
<dbReference type="PANTHER" id="PTHR30426">
    <property type="entry name" value="4-HYDROXY-3-METHYLBUT-2-ENYL DIPHOSPHATE REDUCTASE"/>
    <property type="match status" value="1"/>
</dbReference>
<dbReference type="PANTHER" id="PTHR30426:SF0">
    <property type="entry name" value="4-HYDROXY-3-METHYLBUT-2-ENYL DIPHOSPHATE REDUCTASE"/>
    <property type="match status" value="1"/>
</dbReference>
<dbReference type="Pfam" id="PF02401">
    <property type="entry name" value="LYTB"/>
    <property type="match status" value="1"/>
</dbReference>
<comment type="function">
    <text evidence="1">Catalyzes the conversion of 1-hydroxy-2-methyl-2-(E)-butenyl 4-diphosphate (HMBPP) into a mixture of isopentenyl diphosphate (IPP) and dimethylallyl diphosphate (DMAPP). Acts in the terminal step of the DOXP/MEP pathway for isoprenoid precursor biosynthesis.</text>
</comment>
<comment type="catalytic activity">
    <reaction evidence="1">
        <text>isopentenyl diphosphate + 2 oxidized [2Fe-2S]-[ferredoxin] + H2O = (2E)-4-hydroxy-3-methylbut-2-enyl diphosphate + 2 reduced [2Fe-2S]-[ferredoxin] + 2 H(+)</text>
        <dbReference type="Rhea" id="RHEA:24488"/>
        <dbReference type="Rhea" id="RHEA-COMP:10000"/>
        <dbReference type="Rhea" id="RHEA-COMP:10001"/>
        <dbReference type="ChEBI" id="CHEBI:15377"/>
        <dbReference type="ChEBI" id="CHEBI:15378"/>
        <dbReference type="ChEBI" id="CHEBI:33737"/>
        <dbReference type="ChEBI" id="CHEBI:33738"/>
        <dbReference type="ChEBI" id="CHEBI:128753"/>
        <dbReference type="ChEBI" id="CHEBI:128769"/>
        <dbReference type="EC" id="1.17.7.4"/>
    </reaction>
</comment>
<comment type="catalytic activity">
    <reaction evidence="1">
        <text>dimethylallyl diphosphate + 2 oxidized [2Fe-2S]-[ferredoxin] + H2O = (2E)-4-hydroxy-3-methylbut-2-enyl diphosphate + 2 reduced [2Fe-2S]-[ferredoxin] + 2 H(+)</text>
        <dbReference type="Rhea" id="RHEA:24825"/>
        <dbReference type="Rhea" id="RHEA-COMP:10000"/>
        <dbReference type="Rhea" id="RHEA-COMP:10001"/>
        <dbReference type="ChEBI" id="CHEBI:15377"/>
        <dbReference type="ChEBI" id="CHEBI:15378"/>
        <dbReference type="ChEBI" id="CHEBI:33737"/>
        <dbReference type="ChEBI" id="CHEBI:33738"/>
        <dbReference type="ChEBI" id="CHEBI:57623"/>
        <dbReference type="ChEBI" id="CHEBI:128753"/>
        <dbReference type="EC" id="1.17.7.4"/>
    </reaction>
</comment>
<comment type="cofactor">
    <cofactor evidence="1">
        <name>[4Fe-4S] cluster</name>
        <dbReference type="ChEBI" id="CHEBI:49883"/>
    </cofactor>
    <text evidence="1">Binds 1 [4Fe-4S] cluster per subunit.</text>
</comment>
<comment type="pathway">
    <text evidence="1">Isoprenoid biosynthesis; dimethylallyl diphosphate biosynthesis; dimethylallyl diphosphate from (2E)-4-hydroxy-3-methylbutenyl diphosphate: step 1/1.</text>
</comment>
<comment type="pathway">
    <text evidence="1">Isoprenoid biosynthesis; isopentenyl diphosphate biosynthesis via DXP pathway; isopentenyl diphosphate from 1-deoxy-D-xylulose 5-phosphate: step 6/6.</text>
</comment>
<comment type="similarity">
    <text evidence="1">Belongs to the IspH family.</text>
</comment>
<accession>A5IME1</accession>
<reference key="1">
    <citation type="submission" date="2007-05" db="EMBL/GenBank/DDBJ databases">
        <title>Complete sequence of Thermotoga petrophila RKU-1.</title>
        <authorList>
            <consortium name="US DOE Joint Genome Institute"/>
            <person name="Copeland A."/>
            <person name="Lucas S."/>
            <person name="Lapidus A."/>
            <person name="Barry K."/>
            <person name="Glavina del Rio T."/>
            <person name="Dalin E."/>
            <person name="Tice H."/>
            <person name="Pitluck S."/>
            <person name="Sims D."/>
            <person name="Brettin T."/>
            <person name="Bruce D."/>
            <person name="Detter J.C."/>
            <person name="Han C."/>
            <person name="Tapia R."/>
            <person name="Schmutz J."/>
            <person name="Larimer F."/>
            <person name="Land M."/>
            <person name="Hauser L."/>
            <person name="Kyrpides N."/>
            <person name="Mikhailova N."/>
            <person name="Nelson K."/>
            <person name="Gogarten J.P."/>
            <person name="Noll K."/>
            <person name="Richardson P."/>
        </authorList>
    </citation>
    <scope>NUCLEOTIDE SEQUENCE [LARGE SCALE GENOMIC DNA]</scope>
    <source>
        <strain>ATCC BAA-488 / DSM 13995 / JCM 10881 / RKU-1</strain>
    </source>
</reference>
<gene>
    <name evidence="1" type="primary">ispH</name>
    <name type="ordered locus">Tpet_1350</name>
</gene>
<evidence type="ECO:0000255" key="1">
    <source>
        <dbReference type="HAMAP-Rule" id="MF_00191"/>
    </source>
</evidence>
<keyword id="KW-0004">4Fe-4S</keyword>
<keyword id="KW-0408">Iron</keyword>
<keyword id="KW-0411">Iron-sulfur</keyword>
<keyword id="KW-0414">Isoprene biosynthesis</keyword>
<keyword id="KW-0479">Metal-binding</keyword>
<keyword id="KW-0560">Oxidoreductase</keyword>
<sequence length="275" mass="31031">MKIVVAKNIGFCFGVERAIRTVEELLDEGKKVVTDGEIVHNKQVMEKLTKKGLKVSSEITDGEVFVVRAHGIPKDRLEELKRIFPEVVDLTCPIVSQLFKTAQRYAKERKVIVFGKEDHPEMVALKGYAPAIVTKVPFKLEEKKVVFLSQTTSSLEEYKEFVVTMIRMNEFEEAVFLNTICPVTVNREREVEELSRICELSIVVGGRHSSNTGKLFRIASKHSKTIWIESPDELPADVVKYGTVCVFSGTSTPNSLIENVVRKLKEMEGKRDGTI</sequence>
<protein>
    <recommendedName>
        <fullName evidence="1">4-hydroxy-3-methylbut-2-enyl diphosphate reductase</fullName>
        <shortName evidence="1">HMBPP reductase</shortName>
        <ecNumber evidence="1">1.17.7.4</ecNumber>
    </recommendedName>
</protein>
<organism>
    <name type="scientific">Thermotoga petrophila (strain ATCC BAA-488 / DSM 13995 / JCM 10881 / RKU-1)</name>
    <dbReference type="NCBI Taxonomy" id="390874"/>
    <lineage>
        <taxon>Bacteria</taxon>
        <taxon>Thermotogati</taxon>
        <taxon>Thermotogota</taxon>
        <taxon>Thermotogae</taxon>
        <taxon>Thermotogales</taxon>
        <taxon>Thermotogaceae</taxon>
        <taxon>Thermotoga</taxon>
    </lineage>
</organism>